<keyword id="KW-0028">Amino-acid biosynthesis</keyword>
<keyword id="KW-0032">Aminotransferase</keyword>
<keyword id="KW-0663">Pyridoxal phosphate</keyword>
<keyword id="KW-1185">Reference proteome</keyword>
<keyword id="KW-0718">Serine biosynthesis</keyword>
<keyword id="KW-0808">Transferase</keyword>
<dbReference type="EC" id="2.6.1.52"/>
<dbReference type="EMBL" id="DQ062790">
    <property type="protein sequence ID" value="AAY56663.1"/>
    <property type="molecule type" value="mRNA"/>
</dbReference>
<dbReference type="EMBL" id="AE014297">
    <property type="protein sequence ID" value="AAF56874.1"/>
    <property type="molecule type" value="Genomic_DNA"/>
</dbReference>
<dbReference type="EMBL" id="AY119560">
    <property type="protein sequence ID" value="AAM50214.1"/>
    <property type="molecule type" value="mRNA"/>
</dbReference>
<dbReference type="RefSeq" id="NP_652046.1">
    <property type="nucleotide sequence ID" value="NM_143789.3"/>
</dbReference>
<dbReference type="SMR" id="Q9VAN0"/>
<dbReference type="BioGRID" id="70214">
    <property type="interactions" value="9"/>
</dbReference>
<dbReference type="DIP" id="DIP-17047N"/>
<dbReference type="FunCoup" id="Q9VAN0">
    <property type="interactions" value="979"/>
</dbReference>
<dbReference type="IntAct" id="Q9VAN0">
    <property type="interactions" value="2"/>
</dbReference>
<dbReference type="STRING" id="7227.FBpp0084759"/>
<dbReference type="PaxDb" id="7227-FBpp0084759"/>
<dbReference type="DNASU" id="46391"/>
<dbReference type="EnsemblMetazoa" id="FBtr0085390">
    <property type="protein sequence ID" value="FBpp0084759"/>
    <property type="gene ID" value="FBgn0014427"/>
</dbReference>
<dbReference type="GeneID" id="46391"/>
<dbReference type="KEGG" id="dme:Dmel_CG11899"/>
<dbReference type="UCSC" id="CG11899-RA">
    <property type="organism name" value="d. melanogaster"/>
</dbReference>
<dbReference type="AGR" id="FB:FBgn0014427"/>
<dbReference type="FlyBase" id="FBgn0014427">
    <property type="gene designation" value="Psat"/>
</dbReference>
<dbReference type="VEuPathDB" id="VectorBase:FBgn0014427"/>
<dbReference type="eggNOG" id="KOG2790">
    <property type="taxonomic scope" value="Eukaryota"/>
</dbReference>
<dbReference type="GeneTree" id="ENSGT00940000153241"/>
<dbReference type="HOGENOM" id="CLU_034866_0_1_1"/>
<dbReference type="InParanoid" id="Q9VAN0"/>
<dbReference type="OMA" id="AFVYFCD"/>
<dbReference type="OrthoDB" id="1703350at2759"/>
<dbReference type="PhylomeDB" id="Q9VAN0"/>
<dbReference type="Reactome" id="R-DME-977347">
    <property type="pathway name" value="Serine biosynthesis"/>
</dbReference>
<dbReference type="UniPathway" id="UPA00135">
    <property type="reaction ID" value="UER00197"/>
</dbReference>
<dbReference type="UniPathway" id="UPA00244">
    <property type="reaction ID" value="UER00311"/>
</dbReference>
<dbReference type="BioGRID-ORCS" id="46391">
    <property type="hits" value="0 hits in 1 CRISPR screen"/>
</dbReference>
<dbReference type="GenomeRNAi" id="46391"/>
<dbReference type="PRO" id="PR:Q9VAN0"/>
<dbReference type="Proteomes" id="UP000000803">
    <property type="component" value="Chromosome 3R"/>
</dbReference>
<dbReference type="Bgee" id="FBgn0014427">
    <property type="expression patterns" value="Expressed in capitellum (Drosophila) and 129 other cell types or tissues"/>
</dbReference>
<dbReference type="GO" id="GO:0005737">
    <property type="term" value="C:cytoplasm"/>
    <property type="evidence" value="ECO:0000318"/>
    <property type="project" value="GO_Central"/>
</dbReference>
<dbReference type="GO" id="GO:0005829">
    <property type="term" value="C:cytosol"/>
    <property type="evidence" value="ECO:0000250"/>
    <property type="project" value="FlyBase"/>
</dbReference>
<dbReference type="GO" id="GO:0004648">
    <property type="term" value="F:O-phospho-L-serine:2-oxoglutarate aminotransferase activity"/>
    <property type="evidence" value="ECO:0000250"/>
    <property type="project" value="FlyBase"/>
</dbReference>
<dbReference type="GO" id="GO:0030170">
    <property type="term" value="F:pyridoxal phosphate binding"/>
    <property type="evidence" value="ECO:0000318"/>
    <property type="project" value="GO_Central"/>
</dbReference>
<dbReference type="GO" id="GO:0006564">
    <property type="term" value="P:L-serine biosynthetic process"/>
    <property type="evidence" value="ECO:0000250"/>
    <property type="project" value="FlyBase"/>
</dbReference>
<dbReference type="CDD" id="cd00611">
    <property type="entry name" value="PSAT_like"/>
    <property type="match status" value="1"/>
</dbReference>
<dbReference type="FunFam" id="3.40.640.10:FF:000010">
    <property type="entry name" value="Phosphoserine aminotransferase"/>
    <property type="match status" value="1"/>
</dbReference>
<dbReference type="FunFam" id="3.90.1150.10:FF:000006">
    <property type="entry name" value="Phosphoserine aminotransferase"/>
    <property type="match status" value="1"/>
</dbReference>
<dbReference type="Gene3D" id="3.90.1150.10">
    <property type="entry name" value="Aspartate Aminotransferase, domain 1"/>
    <property type="match status" value="1"/>
</dbReference>
<dbReference type="Gene3D" id="3.40.640.10">
    <property type="entry name" value="Type I PLP-dependent aspartate aminotransferase-like (Major domain)"/>
    <property type="match status" value="1"/>
</dbReference>
<dbReference type="HAMAP" id="MF_00160">
    <property type="entry name" value="SerC_aminotrans_5"/>
    <property type="match status" value="1"/>
</dbReference>
<dbReference type="InterPro" id="IPR000192">
    <property type="entry name" value="Aminotrans_V_dom"/>
</dbReference>
<dbReference type="InterPro" id="IPR020578">
    <property type="entry name" value="Aminotrans_V_PyrdxlP_BS"/>
</dbReference>
<dbReference type="InterPro" id="IPR022278">
    <property type="entry name" value="Pser_aminoTfrase"/>
</dbReference>
<dbReference type="InterPro" id="IPR015424">
    <property type="entry name" value="PyrdxlP-dep_Trfase"/>
</dbReference>
<dbReference type="InterPro" id="IPR015421">
    <property type="entry name" value="PyrdxlP-dep_Trfase_major"/>
</dbReference>
<dbReference type="InterPro" id="IPR015422">
    <property type="entry name" value="PyrdxlP-dep_Trfase_small"/>
</dbReference>
<dbReference type="NCBIfam" id="NF003764">
    <property type="entry name" value="PRK05355.1"/>
    <property type="match status" value="1"/>
</dbReference>
<dbReference type="NCBIfam" id="TIGR01364">
    <property type="entry name" value="serC_1"/>
    <property type="match status" value="1"/>
</dbReference>
<dbReference type="PANTHER" id="PTHR43247">
    <property type="entry name" value="PHOSPHOSERINE AMINOTRANSFERASE"/>
    <property type="match status" value="1"/>
</dbReference>
<dbReference type="PANTHER" id="PTHR43247:SF1">
    <property type="entry name" value="PHOSPHOSERINE AMINOTRANSFERASE"/>
    <property type="match status" value="1"/>
</dbReference>
<dbReference type="Pfam" id="PF00266">
    <property type="entry name" value="Aminotran_5"/>
    <property type="match status" value="1"/>
</dbReference>
<dbReference type="PIRSF" id="PIRSF000525">
    <property type="entry name" value="SerC"/>
    <property type="match status" value="1"/>
</dbReference>
<dbReference type="SUPFAM" id="SSF53383">
    <property type="entry name" value="PLP-dependent transferases"/>
    <property type="match status" value="1"/>
</dbReference>
<dbReference type="PROSITE" id="PS00595">
    <property type="entry name" value="AA_TRANSFER_CLASS_5"/>
    <property type="match status" value="1"/>
</dbReference>
<accession>Q9VAN0</accession>
<accession>Q3YMT6</accession>
<name>SERC_DROME</name>
<feature type="chain" id="PRO_0000150139" description="Phosphoserine aminotransferase">
    <location>
        <begin position="1"/>
        <end position="364"/>
    </location>
</feature>
<feature type="binding site" evidence="1">
    <location>
        <position position="40"/>
    </location>
    <ligand>
        <name>L-glutamate</name>
        <dbReference type="ChEBI" id="CHEBI:29985"/>
    </ligand>
</feature>
<feature type="binding site" evidence="1">
    <location>
        <begin position="74"/>
        <end position="75"/>
    </location>
    <ligand>
        <name>pyridoxal 5'-phosphate</name>
        <dbReference type="ChEBI" id="CHEBI:597326"/>
    </ligand>
</feature>
<feature type="binding site" evidence="1">
    <location>
        <position position="100"/>
    </location>
    <ligand>
        <name>pyridoxal 5'-phosphate</name>
        <dbReference type="ChEBI" id="CHEBI:597326"/>
    </ligand>
</feature>
<feature type="binding site" evidence="1">
    <location>
        <position position="149"/>
    </location>
    <ligand>
        <name>pyridoxal 5'-phosphate</name>
        <dbReference type="ChEBI" id="CHEBI:597326"/>
    </ligand>
</feature>
<feature type="binding site" evidence="1">
    <location>
        <position position="170"/>
    </location>
    <ligand>
        <name>pyridoxal 5'-phosphate</name>
        <dbReference type="ChEBI" id="CHEBI:597326"/>
    </ligand>
</feature>
<feature type="binding site" evidence="1">
    <location>
        <position position="193"/>
    </location>
    <ligand>
        <name>pyridoxal 5'-phosphate</name>
        <dbReference type="ChEBI" id="CHEBI:597326"/>
    </ligand>
</feature>
<feature type="binding site" evidence="1">
    <location>
        <begin position="235"/>
        <end position="236"/>
    </location>
    <ligand>
        <name>pyridoxal 5'-phosphate</name>
        <dbReference type="ChEBI" id="CHEBI:597326"/>
    </ligand>
</feature>
<feature type="modified residue" description="N6-(pyridoxal phosphate)lysine" evidence="1">
    <location>
        <position position="194"/>
    </location>
</feature>
<reference key="1">
    <citation type="journal article" date="2005" name="Mol. Biol. Evol.">
        <title>Rapidly evolving genes of Drosophila: differing levels of selective pressure in testis, ovary, and head tissues between sibling species.</title>
        <authorList>
            <person name="Jagadeeshan S."/>
            <person name="Singh R.S."/>
        </authorList>
    </citation>
    <scope>NUCLEOTIDE SEQUENCE [MRNA]</scope>
    <scope>TISSUE SPECIFICITY</scope>
    <source>
        <tissue>Head</tissue>
    </source>
</reference>
<reference key="2">
    <citation type="journal article" date="2000" name="Science">
        <title>The genome sequence of Drosophila melanogaster.</title>
        <authorList>
            <person name="Adams M.D."/>
            <person name="Celniker S.E."/>
            <person name="Holt R.A."/>
            <person name="Evans C.A."/>
            <person name="Gocayne J.D."/>
            <person name="Amanatides P.G."/>
            <person name="Scherer S.E."/>
            <person name="Li P.W."/>
            <person name="Hoskins R.A."/>
            <person name="Galle R.F."/>
            <person name="George R.A."/>
            <person name="Lewis S.E."/>
            <person name="Richards S."/>
            <person name="Ashburner M."/>
            <person name="Henderson S.N."/>
            <person name="Sutton G.G."/>
            <person name="Wortman J.R."/>
            <person name="Yandell M.D."/>
            <person name="Zhang Q."/>
            <person name="Chen L.X."/>
            <person name="Brandon R.C."/>
            <person name="Rogers Y.-H.C."/>
            <person name="Blazej R.G."/>
            <person name="Champe M."/>
            <person name="Pfeiffer B.D."/>
            <person name="Wan K.H."/>
            <person name="Doyle C."/>
            <person name="Baxter E.G."/>
            <person name="Helt G."/>
            <person name="Nelson C.R."/>
            <person name="Miklos G.L.G."/>
            <person name="Abril J.F."/>
            <person name="Agbayani A."/>
            <person name="An H.-J."/>
            <person name="Andrews-Pfannkoch C."/>
            <person name="Baldwin D."/>
            <person name="Ballew R.M."/>
            <person name="Basu A."/>
            <person name="Baxendale J."/>
            <person name="Bayraktaroglu L."/>
            <person name="Beasley E.M."/>
            <person name="Beeson K.Y."/>
            <person name="Benos P.V."/>
            <person name="Berman B.P."/>
            <person name="Bhandari D."/>
            <person name="Bolshakov S."/>
            <person name="Borkova D."/>
            <person name="Botchan M.R."/>
            <person name="Bouck J."/>
            <person name="Brokstein P."/>
            <person name="Brottier P."/>
            <person name="Burtis K.C."/>
            <person name="Busam D.A."/>
            <person name="Butler H."/>
            <person name="Cadieu E."/>
            <person name="Center A."/>
            <person name="Chandra I."/>
            <person name="Cherry J.M."/>
            <person name="Cawley S."/>
            <person name="Dahlke C."/>
            <person name="Davenport L.B."/>
            <person name="Davies P."/>
            <person name="de Pablos B."/>
            <person name="Delcher A."/>
            <person name="Deng Z."/>
            <person name="Mays A.D."/>
            <person name="Dew I."/>
            <person name="Dietz S.M."/>
            <person name="Dodson K."/>
            <person name="Doup L.E."/>
            <person name="Downes M."/>
            <person name="Dugan-Rocha S."/>
            <person name="Dunkov B.C."/>
            <person name="Dunn P."/>
            <person name="Durbin K.J."/>
            <person name="Evangelista C.C."/>
            <person name="Ferraz C."/>
            <person name="Ferriera S."/>
            <person name="Fleischmann W."/>
            <person name="Fosler C."/>
            <person name="Gabrielian A.E."/>
            <person name="Garg N.S."/>
            <person name="Gelbart W.M."/>
            <person name="Glasser K."/>
            <person name="Glodek A."/>
            <person name="Gong F."/>
            <person name="Gorrell J.H."/>
            <person name="Gu Z."/>
            <person name="Guan P."/>
            <person name="Harris M."/>
            <person name="Harris N.L."/>
            <person name="Harvey D.A."/>
            <person name="Heiman T.J."/>
            <person name="Hernandez J.R."/>
            <person name="Houck J."/>
            <person name="Hostin D."/>
            <person name="Houston K.A."/>
            <person name="Howland T.J."/>
            <person name="Wei M.-H."/>
            <person name="Ibegwam C."/>
            <person name="Jalali M."/>
            <person name="Kalush F."/>
            <person name="Karpen G.H."/>
            <person name="Ke Z."/>
            <person name="Kennison J.A."/>
            <person name="Ketchum K.A."/>
            <person name="Kimmel B.E."/>
            <person name="Kodira C.D."/>
            <person name="Kraft C.L."/>
            <person name="Kravitz S."/>
            <person name="Kulp D."/>
            <person name="Lai Z."/>
            <person name="Lasko P."/>
            <person name="Lei Y."/>
            <person name="Levitsky A.A."/>
            <person name="Li J.H."/>
            <person name="Li Z."/>
            <person name="Liang Y."/>
            <person name="Lin X."/>
            <person name="Liu X."/>
            <person name="Mattei B."/>
            <person name="McIntosh T.C."/>
            <person name="McLeod M.P."/>
            <person name="McPherson D."/>
            <person name="Merkulov G."/>
            <person name="Milshina N.V."/>
            <person name="Mobarry C."/>
            <person name="Morris J."/>
            <person name="Moshrefi A."/>
            <person name="Mount S.M."/>
            <person name="Moy M."/>
            <person name="Murphy B."/>
            <person name="Murphy L."/>
            <person name="Muzny D.M."/>
            <person name="Nelson D.L."/>
            <person name="Nelson D.R."/>
            <person name="Nelson K.A."/>
            <person name="Nixon K."/>
            <person name="Nusskern D.R."/>
            <person name="Pacleb J.M."/>
            <person name="Palazzolo M."/>
            <person name="Pittman G.S."/>
            <person name="Pan S."/>
            <person name="Pollard J."/>
            <person name="Puri V."/>
            <person name="Reese M.G."/>
            <person name="Reinert K."/>
            <person name="Remington K."/>
            <person name="Saunders R.D.C."/>
            <person name="Scheeler F."/>
            <person name="Shen H."/>
            <person name="Shue B.C."/>
            <person name="Siden-Kiamos I."/>
            <person name="Simpson M."/>
            <person name="Skupski M.P."/>
            <person name="Smith T.J."/>
            <person name="Spier E."/>
            <person name="Spradling A.C."/>
            <person name="Stapleton M."/>
            <person name="Strong R."/>
            <person name="Sun E."/>
            <person name="Svirskas R."/>
            <person name="Tector C."/>
            <person name="Turner R."/>
            <person name="Venter E."/>
            <person name="Wang A.H."/>
            <person name="Wang X."/>
            <person name="Wang Z.-Y."/>
            <person name="Wassarman D.A."/>
            <person name="Weinstock G.M."/>
            <person name="Weissenbach J."/>
            <person name="Williams S.M."/>
            <person name="Woodage T."/>
            <person name="Worley K.C."/>
            <person name="Wu D."/>
            <person name="Yang S."/>
            <person name="Yao Q.A."/>
            <person name="Ye J."/>
            <person name="Yeh R.-F."/>
            <person name="Zaveri J.S."/>
            <person name="Zhan M."/>
            <person name="Zhang G."/>
            <person name="Zhao Q."/>
            <person name="Zheng L."/>
            <person name="Zheng X.H."/>
            <person name="Zhong F.N."/>
            <person name="Zhong W."/>
            <person name="Zhou X."/>
            <person name="Zhu S.C."/>
            <person name="Zhu X."/>
            <person name="Smith H.O."/>
            <person name="Gibbs R.A."/>
            <person name="Myers E.W."/>
            <person name="Rubin G.M."/>
            <person name="Venter J.C."/>
        </authorList>
    </citation>
    <scope>NUCLEOTIDE SEQUENCE [LARGE SCALE GENOMIC DNA]</scope>
    <source>
        <strain>Berkeley</strain>
    </source>
</reference>
<reference key="3">
    <citation type="journal article" date="2002" name="Genome Biol.">
        <title>Annotation of the Drosophila melanogaster euchromatic genome: a systematic review.</title>
        <authorList>
            <person name="Misra S."/>
            <person name="Crosby M.A."/>
            <person name="Mungall C.J."/>
            <person name="Matthews B.B."/>
            <person name="Campbell K.S."/>
            <person name="Hradecky P."/>
            <person name="Huang Y."/>
            <person name="Kaminker J.S."/>
            <person name="Millburn G.H."/>
            <person name="Prochnik S.E."/>
            <person name="Smith C.D."/>
            <person name="Tupy J.L."/>
            <person name="Whitfield E.J."/>
            <person name="Bayraktaroglu L."/>
            <person name="Berman B.P."/>
            <person name="Bettencourt B.R."/>
            <person name="Celniker S.E."/>
            <person name="de Grey A.D.N.J."/>
            <person name="Drysdale R.A."/>
            <person name="Harris N.L."/>
            <person name="Richter J."/>
            <person name="Russo S."/>
            <person name="Schroeder A.J."/>
            <person name="Shu S.Q."/>
            <person name="Stapleton M."/>
            <person name="Yamada C."/>
            <person name="Ashburner M."/>
            <person name="Gelbart W.M."/>
            <person name="Rubin G.M."/>
            <person name="Lewis S.E."/>
        </authorList>
    </citation>
    <scope>GENOME REANNOTATION</scope>
    <source>
        <strain>Berkeley</strain>
    </source>
</reference>
<reference key="4">
    <citation type="journal article" date="2002" name="Genome Biol.">
        <title>A Drosophila full-length cDNA resource.</title>
        <authorList>
            <person name="Stapleton M."/>
            <person name="Carlson J.W."/>
            <person name="Brokstein P."/>
            <person name="Yu C."/>
            <person name="Champe M."/>
            <person name="George R.A."/>
            <person name="Guarin H."/>
            <person name="Kronmiller B."/>
            <person name="Pacleb J.M."/>
            <person name="Park S."/>
            <person name="Wan K.H."/>
            <person name="Rubin G.M."/>
            <person name="Celniker S.E."/>
        </authorList>
    </citation>
    <scope>NUCLEOTIDE SEQUENCE [LARGE SCALE MRNA]</scope>
    <source>
        <strain>Berkeley</strain>
        <tissue>Ovary</tissue>
    </source>
</reference>
<proteinExistence type="evidence at transcript level"/>
<protein>
    <recommendedName>
        <fullName evidence="4">Phosphoserine aminotransferase</fullName>
        <ecNumber>2.6.1.52</ecNumber>
    </recommendedName>
    <alternativeName>
        <fullName>Phosphohydroxythreonine aminotransferase</fullName>
    </alternativeName>
</protein>
<organism evidence="6">
    <name type="scientific">Drosophila melanogaster</name>
    <name type="common">Fruit fly</name>
    <dbReference type="NCBI Taxonomy" id="7227"/>
    <lineage>
        <taxon>Eukaryota</taxon>
        <taxon>Metazoa</taxon>
        <taxon>Ecdysozoa</taxon>
        <taxon>Arthropoda</taxon>
        <taxon>Hexapoda</taxon>
        <taxon>Insecta</taxon>
        <taxon>Pterygota</taxon>
        <taxon>Neoptera</taxon>
        <taxon>Endopterygota</taxon>
        <taxon>Diptera</taxon>
        <taxon>Brachycera</taxon>
        <taxon>Muscomorpha</taxon>
        <taxon>Ephydroidea</taxon>
        <taxon>Drosophilidae</taxon>
        <taxon>Drosophila</taxon>
        <taxon>Sophophora</taxon>
    </lineage>
</organism>
<evidence type="ECO:0000250" key="1"/>
<evidence type="ECO:0000250" key="2">
    <source>
        <dbReference type="UniProtKB" id="P10658"/>
    </source>
</evidence>
<evidence type="ECO:0000269" key="3">
    <source>
    </source>
</evidence>
<evidence type="ECO:0000305" key="4"/>
<evidence type="ECO:0000312" key="5">
    <source>
        <dbReference type="FlyBase" id="FBgn0014427"/>
    </source>
</evidence>
<evidence type="ECO:0000312" key="6">
    <source>
        <dbReference type="Proteomes" id="UP000000803"/>
    </source>
</evidence>
<sequence length="364" mass="39540">MVINFAAGPAKLPEEVLKEVQENLVNCNGSGISVMEMSHRSSNYAKIHDATISDLRELLNVPSNYKILLMQGGGTGQFAAVALNLIGKTGTADYVITGSWSAKAAKEAAQYGTVNAVLPKLAKYTTVPRQETWKLDPNASYVYYCDNETVEGVEFDFVPEVPAGVPLVADMSSNFLSRPFDVSKFGVIYAGAQKNIGPAGTTVIIVRDDLIGKHLKITPSILNFEQMDKNNSLLNTPPTFGIYVMGLVFKWIKRNGGVAGMAKLAAAKSKLIYDTINQSNGFYYCPVDVNVRSRMNVPFRIGSASGDDALEKEFLSKAEAEGMIQLKGHRSVGGIRASLYNAVTLAETQQLANLMLAFYKNNKN</sequence>
<comment type="function">
    <text evidence="2">Catalyzes the reversible conversion of 3-phosphohydroxypyruvate to phosphoserine and of 3-hydroxy-2-oxo-4-phosphonooxybutanoate to phosphohydroxythreonine.</text>
</comment>
<comment type="catalytic activity">
    <reaction>
        <text>O-phospho-L-serine + 2-oxoglutarate = 3-phosphooxypyruvate + L-glutamate</text>
        <dbReference type="Rhea" id="RHEA:14329"/>
        <dbReference type="ChEBI" id="CHEBI:16810"/>
        <dbReference type="ChEBI" id="CHEBI:18110"/>
        <dbReference type="ChEBI" id="CHEBI:29985"/>
        <dbReference type="ChEBI" id="CHEBI:57524"/>
        <dbReference type="EC" id="2.6.1.52"/>
    </reaction>
</comment>
<comment type="catalytic activity">
    <reaction>
        <text>4-(phosphooxy)-L-threonine + 2-oxoglutarate = (R)-3-hydroxy-2-oxo-4-phosphooxybutanoate + L-glutamate</text>
        <dbReference type="Rhea" id="RHEA:16573"/>
        <dbReference type="ChEBI" id="CHEBI:16810"/>
        <dbReference type="ChEBI" id="CHEBI:29985"/>
        <dbReference type="ChEBI" id="CHEBI:58452"/>
        <dbReference type="ChEBI" id="CHEBI:58538"/>
        <dbReference type="EC" id="2.6.1.52"/>
    </reaction>
</comment>
<comment type="cofactor">
    <cofactor evidence="1">
        <name>pyridoxal 5'-phosphate</name>
        <dbReference type="ChEBI" id="CHEBI:597326"/>
    </cofactor>
    <text evidence="1">Binds 1 pyridoxal phosphate per subunit.</text>
</comment>
<comment type="pathway">
    <text>Amino-acid biosynthesis; L-serine biosynthesis; L-serine from 3-phospho-D-glycerate: step 2/3.</text>
</comment>
<comment type="pathway">
    <text>Cofactor biosynthesis; pyridoxine 5'-phosphate biosynthesis; pyridoxine 5'-phosphate from D-erythrose 4-phosphate: step 3/5.</text>
</comment>
<comment type="subunit">
    <text evidence="1">Homodimer.</text>
</comment>
<comment type="tissue specificity">
    <text evidence="3">Expressed in ovary and head.</text>
</comment>
<comment type="similarity">
    <text evidence="4">Belongs to the class-V pyridoxal-phosphate-dependent aminotransferase family. SerC subfamily.</text>
</comment>
<gene>
    <name evidence="5" type="primary">Psat</name>
    <name evidence="5" type="ORF">CG11899</name>
</gene>